<organism>
    <name type="scientific">Arabidopsis thaliana</name>
    <name type="common">Mouse-ear cress</name>
    <dbReference type="NCBI Taxonomy" id="3702"/>
    <lineage>
        <taxon>Eukaryota</taxon>
        <taxon>Viridiplantae</taxon>
        <taxon>Streptophyta</taxon>
        <taxon>Embryophyta</taxon>
        <taxon>Tracheophyta</taxon>
        <taxon>Spermatophyta</taxon>
        <taxon>Magnoliopsida</taxon>
        <taxon>eudicotyledons</taxon>
        <taxon>Gunneridae</taxon>
        <taxon>Pentapetalae</taxon>
        <taxon>rosids</taxon>
        <taxon>malvids</taxon>
        <taxon>Brassicales</taxon>
        <taxon>Brassicaceae</taxon>
        <taxon>Camelineae</taxon>
        <taxon>Arabidopsis</taxon>
    </lineage>
</organism>
<gene>
    <name evidence="6" type="primary">CEP6</name>
    <name evidence="10" type="ordered locus">At5g66816</name>
    <name evidence="8" type="ORF">MUD21</name>
</gene>
<sequence length="101" mass="11222">MKLSVYIILSILFISTVFYEIQFTEARQLRKTDDQDHDDHHFTVGYTDDFGPTSPGNSPGIGHKMKENEENAGGYKDDFEPTTPGHSPGVGHAVKNNEPNA</sequence>
<dbReference type="EMBL" id="AB010700">
    <property type="status" value="NOT_ANNOTATED_CDS"/>
    <property type="molecule type" value="Genomic_DNA"/>
</dbReference>
<dbReference type="EMBL" id="CP002688">
    <property type="protein sequence ID" value="AED98267.1"/>
    <property type="molecule type" value="Genomic_DNA"/>
</dbReference>
<dbReference type="RefSeq" id="NP_001119514.1">
    <property type="nucleotide sequence ID" value="NM_001126042.2"/>
</dbReference>
<dbReference type="SMR" id="B3H5A9"/>
<dbReference type="STRING" id="3702.B3H5A9"/>
<dbReference type="PaxDb" id="3702-AT5G66816.1"/>
<dbReference type="EnsemblPlants" id="AT5G66816.1">
    <property type="protein sequence ID" value="AT5G66816.1"/>
    <property type="gene ID" value="AT5G66816"/>
</dbReference>
<dbReference type="GeneID" id="6240245"/>
<dbReference type="Gramene" id="AT5G66816.1">
    <property type="protein sequence ID" value="AT5G66816.1"/>
    <property type="gene ID" value="AT5G66816"/>
</dbReference>
<dbReference type="KEGG" id="ath:AT5G66816"/>
<dbReference type="Araport" id="AT5G66816"/>
<dbReference type="TAIR" id="AT5G66816"/>
<dbReference type="eggNOG" id="ENOG502S6UF">
    <property type="taxonomic scope" value="Eukaryota"/>
</dbReference>
<dbReference type="HOGENOM" id="CLU_2295563_0_0_1"/>
<dbReference type="InParanoid" id="B3H5A9"/>
<dbReference type="OMA" id="GHKMKEN"/>
<dbReference type="PhylomeDB" id="B3H5A9"/>
<dbReference type="PRO" id="PR:B3H5A9"/>
<dbReference type="Proteomes" id="UP000006548">
    <property type="component" value="Chromosome 5"/>
</dbReference>
<dbReference type="ExpressionAtlas" id="B3H5A9">
    <property type="expression patterns" value="baseline and differential"/>
</dbReference>
<dbReference type="GO" id="GO:0048046">
    <property type="term" value="C:apoplast"/>
    <property type="evidence" value="ECO:0000314"/>
    <property type="project" value="UniProtKB"/>
</dbReference>
<dbReference type="GO" id="GO:0005179">
    <property type="term" value="F:hormone activity"/>
    <property type="evidence" value="ECO:0000250"/>
    <property type="project" value="UniProtKB"/>
</dbReference>
<dbReference type="GO" id="GO:0006995">
    <property type="term" value="P:cellular response to nitrogen starvation"/>
    <property type="evidence" value="ECO:0000270"/>
    <property type="project" value="UniProtKB"/>
</dbReference>
<dbReference type="GO" id="GO:1902025">
    <property type="term" value="P:nitrate import"/>
    <property type="evidence" value="ECO:0000314"/>
    <property type="project" value="UniProtKB"/>
</dbReference>
<dbReference type="GO" id="GO:1901371">
    <property type="term" value="P:regulation of leaf morphogenesis"/>
    <property type="evidence" value="ECO:0000315"/>
    <property type="project" value="UniProtKB"/>
</dbReference>
<dbReference type="GO" id="GO:2000280">
    <property type="term" value="P:regulation of root development"/>
    <property type="evidence" value="ECO:0000315"/>
    <property type="project" value="UniProtKB"/>
</dbReference>
<dbReference type="GO" id="GO:0048364">
    <property type="term" value="P:root development"/>
    <property type="evidence" value="ECO:0007669"/>
    <property type="project" value="InterPro"/>
</dbReference>
<dbReference type="InterPro" id="IPR033250">
    <property type="entry name" value="CEP"/>
</dbReference>
<dbReference type="PANTHER" id="PTHR33348">
    <property type="entry name" value="PRECURSOR OF CEP5"/>
    <property type="match status" value="1"/>
</dbReference>
<dbReference type="PANTHER" id="PTHR33348:SF44">
    <property type="entry name" value="PRECURSOR OF CEP6"/>
    <property type="match status" value="1"/>
</dbReference>
<keyword id="KW-0052">Apoplast</keyword>
<keyword id="KW-0217">Developmental protein</keyword>
<keyword id="KW-0903">Direct protein sequencing</keyword>
<keyword id="KW-0372">Hormone</keyword>
<keyword id="KW-0379">Hydroxylation</keyword>
<keyword id="KW-1185">Reference proteome</keyword>
<keyword id="KW-0964">Secreted</keyword>
<keyword id="KW-0732">Signal</keyword>
<evidence type="ECO:0000250" key="1">
    <source>
        <dbReference type="UniProtKB" id="Q8L8Y3"/>
    </source>
</evidence>
<evidence type="ECO:0000255" key="2"/>
<evidence type="ECO:0000256" key="3">
    <source>
        <dbReference type="SAM" id="MobiDB-lite"/>
    </source>
</evidence>
<evidence type="ECO:0000269" key="4">
    <source>
    </source>
</evidence>
<evidence type="ECO:0000269" key="5">
    <source>
    </source>
</evidence>
<evidence type="ECO:0000303" key="6">
    <source>
    </source>
</evidence>
<evidence type="ECO:0000303" key="7">
    <source>
    </source>
</evidence>
<evidence type="ECO:0000305" key="8"/>
<evidence type="ECO:0000305" key="9">
    <source>
    </source>
</evidence>
<evidence type="ECO:0000312" key="10">
    <source>
        <dbReference type="Araport" id="AT5G66816"/>
    </source>
</evidence>
<reference key="1">
    <citation type="journal article" date="1998" name="DNA Res.">
        <title>Structural analysis of Arabidopsis thaliana chromosome 5. V. Sequence features of the regions of 1,381,565 bp covered by twenty one physically assigned P1 and TAC clones.</title>
        <authorList>
            <person name="Kaneko T."/>
            <person name="Kotani H."/>
            <person name="Nakamura Y."/>
            <person name="Sato S."/>
            <person name="Asamizu E."/>
            <person name="Miyajima N."/>
            <person name="Tabata S."/>
        </authorList>
    </citation>
    <scope>NUCLEOTIDE SEQUENCE [LARGE SCALE GENOMIC DNA]</scope>
    <source>
        <strain>cv. Columbia</strain>
    </source>
</reference>
<reference key="2">
    <citation type="journal article" date="2017" name="Plant J.">
        <title>Araport11: a complete reannotation of the Arabidopsis thaliana reference genome.</title>
        <authorList>
            <person name="Cheng C.Y."/>
            <person name="Krishnakumar V."/>
            <person name="Chan A.P."/>
            <person name="Thibaud-Nissen F."/>
            <person name="Schobel S."/>
            <person name="Town C.D."/>
        </authorList>
    </citation>
    <scope>GENOME REANNOTATION</scope>
    <source>
        <strain>cv. Columbia</strain>
    </source>
</reference>
<reference key="3">
    <citation type="journal article" date="2013" name="J. Exp. Bot.">
        <title>The CEP family in land plants: evolutionary analyses, expression studies, and role in Arabidopsis shoot development.</title>
        <authorList>
            <person name="Roberts I."/>
            <person name="Smith S."/>
            <person name="De Rybel B."/>
            <person name="Van Den Broeke J."/>
            <person name="Smet W."/>
            <person name="De Cokere S."/>
            <person name="Mispelaere M."/>
            <person name="De Smet I."/>
            <person name="Beeckman T."/>
        </authorList>
    </citation>
    <scope>GENE FAMILY</scope>
    <source>
        <strain>cv. Columbia</strain>
    </source>
</reference>
<reference key="4">
    <citation type="journal article" date="2013" name="J. Exp. Bot.">
        <title>CEP genes regulate root and shoot development in response to environmental cues and are specific to seed plants.</title>
        <authorList>
            <person name="Delay C."/>
            <person name="Imin N."/>
            <person name="Djordjevic M.A."/>
        </authorList>
    </citation>
    <scope>FUNCTION</scope>
    <scope>GENE FAMILY</scope>
    <scope>NOMENCLATURE</scope>
    <source>
        <strain>cv. Columbia</strain>
    </source>
</reference>
<reference key="5">
    <citation type="journal article" date="2014" name="Science">
        <title>Perception of root-derived peptides by shoot LRR-RKs mediates systemic N-demand signaling.</title>
        <authorList>
            <person name="Tabata R."/>
            <person name="Sumida K."/>
            <person name="Yoshii T."/>
            <person name="Ohyama K."/>
            <person name="Shinohara H."/>
            <person name="Matsubayashi Y."/>
        </authorList>
    </citation>
    <scope>PROTEIN SEQUENCE OF 49-63 AND 78-92</scope>
    <scope>PTM</scope>
    <scope>FUNCTION</scope>
    <scope>HYDROXYLATION AT PRO-52; PRO-55; PRO-59; PRO-84 AND PRO-88</scope>
    <scope>TISSUE SPECIFICITY</scope>
    <scope>INDUCTION BY NITROGEN DEPLETION</scope>
    <scope>SUBCELLULAR LOCATION</scope>
    <source>
        <strain>cv. No-0</strain>
    </source>
</reference>
<protein>
    <recommendedName>
        <fullName evidence="6">Precursor of CEP6</fullName>
        <shortName evidence="6">PCEP6</shortName>
    </recommendedName>
    <component>
        <recommendedName>
            <fullName evidence="6">C-terminally encoded peptide 6.1</fullName>
            <shortName evidence="6">CEP6.1</shortName>
            <shortName evidence="7">CEP6a</shortName>
        </recommendedName>
    </component>
    <component>
        <recommendedName>
            <fullName evidence="6">C-terminally encoded peptide 6.2</fullName>
            <shortName evidence="6">CEP6.2</shortName>
            <shortName evidence="7">CEP6b</shortName>
        </recommendedName>
    </component>
</protein>
<name>PCEP6_ARATH</name>
<accession>B3H5A9</accession>
<comment type="function">
    <text evidence="4 5">Extracellular signaling peptide that represses primary root growth rate. Modulates leaf morphology (PubMed:24179096). Regulates systemic nitrogen (N)-demand signaling. Mediates up-regulation of genes involved in N uptake and assimilation pathways (PubMed:25324386).</text>
</comment>
<comment type="subunit">
    <text evidence="1">Interacts with CEP receptors (e.g. CEPR1 and CEPR2).</text>
</comment>
<comment type="subcellular location">
    <molecule>C-terminally encoded peptide 6.2</molecule>
    <subcellularLocation>
        <location evidence="5">Secreted</location>
        <location evidence="5">Extracellular space</location>
        <location evidence="5">Apoplast</location>
    </subcellularLocation>
    <text evidence="5">Accumulates in xylem sap under nitrogen (N)-starved conditions.</text>
</comment>
<comment type="subcellular location">
    <molecule>C-terminally encoded peptide 6.1</molecule>
    <subcellularLocation>
        <location evidence="9">Secreted</location>
        <location evidence="9">Extracellular space</location>
        <location evidence="9">Apoplast</location>
    </subcellularLocation>
    <text evidence="9">Accumulates in xylem sap.</text>
</comment>
<comment type="tissue specificity">
    <text evidence="5">Expressed in lateral root primordia and in lateral roots excluding the meristem region. Also present in the aerial tissues, such as leaf petioles and the shoot apex region.</text>
</comment>
<comment type="induction">
    <text evidence="5">Triggered by nitrogen depletion.</text>
</comment>
<comment type="PTM">
    <text evidence="5">The mature small signaling peptide is generated by proteolytic processing of the longer precursor.</text>
</comment>
<comment type="similarity">
    <text evidence="8">Belongs to the C-terminally encoded plant signaling peptide (CEP) family.</text>
</comment>
<feature type="signal peptide" evidence="2">
    <location>
        <begin position="1"/>
        <end position="26"/>
    </location>
</feature>
<feature type="propeptide" id="PRO_0000439977" evidence="9">
    <location>
        <begin position="27"/>
        <end position="48"/>
    </location>
</feature>
<feature type="peptide" id="PRO_0000439978" description="C-terminally encoded peptide 6.1" evidence="5">
    <location>
        <begin position="49"/>
        <end position="63"/>
    </location>
</feature>
<feature type="propeptide" id="PRO_0000439979" evidence="9">
    <location>
        <begin position="64"/>
        <end position="77"/>
    </location>
</feature>
<feature type="peptide" id="PRO_0000439980" description="C-terminally encoded peptide 6.2" evidence="5">
    <location>
        <begin position="78"/>
        <end position="92"/>
    </location>
</feature>
<feature type="propeptide" id="PRO_0000439981" evidence="9">
    <location>
        <begin position="93"/>
        <end position="101"/>
    </location>
</feature>
<feature type="region of interest" description="Disordered" evidence="3">
    <location>
        <begin position="29"/>
        <end position="101"/>
    </location>
</feature>
<feature type="compositionally biased region" description="Basic and acidic residues" evidence="3">
    <location>
        <begin position="29"/>
        <end position="42"/>
    </location>
</feature>
<feature type="compositionally biased region" description="Basic and acidic residues" evidence="3">
    <location>
        <begin position="64"/>
        <end position="79"/>
    </location>
</feature>
<feature type="modified residue" description="Hydroxyproline" evidence="5">
    <location>
        <position position="52"/>
    </location>
</feature>
<feature type="modified residue" description="Hydroxyproline" evidence="5">
    <location>
        <position position="55"/>
    </location>
</feature>
<feature type="modified residue" description="Hydroxyproline" evidence="5">
    <location>
        <position position="59"/>
    </location>
</feature>
<feature type="modified residue" description="Hydroxyproline" evidence="1">
    <location>
        <position position="81"/>
    </location>
</feature>
<feature type="modified residue" description="Hydroxyproline" evidence="5">
    <location>
        <position position="84"/>
    </location>
</feature>
<feature type="modified residue" description="Hydroxyproline" evidence="5">
    <location>
        <position position="88"/>
    </location>
</feature>
<proteinExistence type="evidence at protein level"/>